<proteinExistence type="inferred from homology"/>
<reference key="1">
    <citation type="journal article" date="1994" name="J. Biochem.">
        <title>Expression of mRNA for matrix gamma-carboxyglutamic acid protein during progression of atherosclerosis in aortae of Watanabe heritable hyperlipidemic rabbits.</title>
        <authorList>
            <person name="Sohma Y."/>
            <person name="Suzuki T."/>
            <person name="Sasano H."/>
            <person name="Nagura H."/>
            <person name="Nose M."/>
            <person name="Yamamoto T."/>
        </authorList>
    </citation>
    <scope>NUCLEOTIDE SEQUENCE [MRNA]</scope>
    <source>
        <tissue>Aorta</tissue>
    </source>
</reference>
<comment type="function">
    <text>Associates with the organic matrix of bone and cartilage. Thought to act as an inhibitor of bone formation.</text>
</comment>
<comment type="subcellular location">
    <subcellularLocation>
        <location>Secreted</location>
    </subcellularLocation>
</comment>
<comment type="PTM">
    <text>Requires vitamin K-dependent gamma-carboxylation for its function.</text>
</comment>
<comment type="similarity">
    <text evidence="4">Belongs to the osteocalcin/matrix Gla protein family.</text>
</comment>
<dbReference type="EMBL" id="D21265">
    <property type="protein sequence ID" value="BAA04805.1"/>
    <property type="molecule type" value="mRNA"/>
</dbReference>
<dbReference type="PIR" id="JX0354">
    <property type="entry name" value="GERBM1"/>
</dbReference>
<dbReference type="RefSeq" id="NP_001075669.1">
    <property type="nucleotide sequence ID" value="NM_001082200.1"/>
</dbReference>
<dbReference type="SMR" id="P47841"/>
<dbReference type="FunCoup" id="P47841">
    <property type="interactions" value="24"/>
</dbReference>
<dbReference type="STRING" id="9986.ENSOCUP00000014573"/>
<dbReference type="PaxDb" id="9986-ENSOCUP00000014573"/>
<dbReference type="Ensembl" id="ENSOCUT00000016959.2">
    <property type="protein sequence ID" value="ENSOCUP00000014573.2"/>
    <property type="gene ID" value="ENSOCUG00000016964.2"/>
</dbReference>
<dbReference type="GeneID" id="100008989"/>
<dbReference type="KEGG" id="ocu:100008989"/>
<dbReference type="CTD" id="4256"/>
<dbReference type="eggNOG" id="ENOG502S45A">
    <property type="taxonomic scope" value="Eukaryota"/>
</dbReference>
<dbReference type="GeneTree" id="ENSGT00390000003753"/>
<dbReference type="HOGENOM" id="CLU_177119_1_0_1"/>
<dbReference type="InParanoid" id="P47841"/>
<dbReference type="OMA" id="TAFCYES"/>
<dbReference type="OrthoDB" id="8958520at2759"/>
<dbReference type="TreeFam" id="TF330920"/>
<dbReference type="Proteomes" id="UP000001811">
    <property type="component" value="Chromosome 8"/>
</dbReference>
<dbReference type="Bgee" id="ENSOCUG00000016964">
    <property type="expression patterns" value="Expressed in aorta and 17 other cell types or tissues"/>
</dbReference>
<dbReference type="GO" id="GO:0031012">
    <property type="term" value="C:extracellular matrix"/>
    <property type="evidence" value="ECO:0007669"/>
    <property type="project" value="InterPro"/>
</dbReference>
<dbReference type="GO" id="GO:0005576">
    <property type="term" value="C:extracellular region"/>
    <property type="evidence" value="ECO:0007669"/>
    <property type="project" value="UniProtKB-SubCell"/>
</dbReference>
<dbReference type="GO" id="GO:0005509">
    <property type="term" value="F:calcium ion binding"/>
    <property type="evidence" value="ECO:0007669"/>
    <property type="project" value="InterPro"/>
</dbReference>
<dbReference type="GO" id="GO:0051216">
    <property type="term" value="P:cartilage development"/>
    <property type="evidence" value="ECO:0007669"/>
    <property type="project" value="UniProtKB-KW"/>
</dbReference>
<dbReference type="GO" id="GO:0030154">
    <property type="term" value="P:cell differentiation"/>
    <property type="evidence" value="ECO:0007669"/>
    <property type="project" value="UniProtKB-KW"/>
</dbReference>
<dbReference type="GO" id="GO:0001503">
    <property type="term" value="P:ossification"/>
    <property type="evidence" value="ECO:0007669"/>
    <property type="project" value="UniProtKB-KW"/>
</dbReference>
<dbReference type="GO" id="GO:0030500">
    <property type="term" value="P:regulation of bone mineralization"/>
    <property type="evidence" value="ECO:0007669"/>
    <property type="project" value="InterPro"/>
</dbReference>
<dbReference type="InterPro" id="IPR035972">
    <property type="entry name" value="GLA-like_dom_SF"/>
</dbReference>
<dbReference type="InterPro" id="IPR000294">
    <property type="entry name" value="GLA_domain"/>
</dbReference>
<dbReference type="InterPro" id="IPR027118">
    <property type="entry name" value="MGP"/>
</dbReference>
<dbReference type="InterPro" id="IPR002384">
    <property type="entry name" value="Osteocalcin/MGP"/>
</dbReference>
<dbReference type="PANTHER" id="PTHR10109">
    <property type="entry name" value="MATRIX GLA PROTEIN"/>
    <property type="match status" value="1"/>
</dbReference>
<dbReference type="PANTHER" id="PTHR10109:SF0">
    <property type="entry name" value="MATRIX GLA PROTEIN"/>
    <property type="match status" value="1"/>
</dbReference>
<dbReference type="PRINTS" id="PR00002">
    <property type="entry name" value="GLABONE"/>
</dbReference>
<dbReference type="SMART" id="SM00069">
    <property type="entry name" value="GLA"/>
    <property type="match status" value="1"/>
</dbReference>
<dbReference type="SUPFAM" id="SSF57630">
    <property type="entry name" value="GLA-domain"/>
    <property type="match status" value="1"/>
</dbReference>
<dbReference type="PROSITE" id="PS00011">
    <property type="entry name" value="GLA_1"/>
    <property type="match status" value="1"/>
</dbReference>
<dbReference type="PROSITE" id="PS50998">
    <property type="entry name" value="GLA_2"/>
    <property type="match status" value="1"/>
</dbReference>
<accession>P47841</accession>
<feature type="signal peptide" evidence="1">
    <location>
        <begin position="1"/>
        <end position="19"/>
    </location>
</feature>
<feature type="chain" id="PRO_0000011115" description="Matrix Gla protein">
    <location>
        <begin position="20"/>
        <end position="103"/>
    </location>
</feature>
<feature type="domain" description="Gla" evidence="3">
    <location>
        <begin position="51"/>
        <end position="97"/>
    </location>
</feature>
<feature type="modified residue" description="4-carboxyglutamate" evidence="2 3">
    <location>
        <position position="21"/>
    </location>
</feature>
<feature type="modified residue" description="Phosphoserine" evidence="2">
    <location>
        <position position="22"/>
    </location>
</feature>
<feature type="modified residue" description="Phosphoserine" evidence="2">
    <location>
        <position position="25"/>
    </location>
</feature>
<feature type="modified residue" description="Phosphoserine" evidence="2">
    <location>
        <position position="28"/>
    </location>
</feature>
<feature type="modified residue" description="4-carboxyglutamate" evidence="2 3">
    <location>
        <position position="56"/>
    </location>
</feature>
<feature type="modified residue" description="4-carboxyglutamate" evidence="2 3">
    <location>
        <position position="60"/>
    </location>
</feature>
<feature type="modified residue" description="4-carboxyglutamate" evidence="2 3">
    <location>
        <position position="67"/>
    </location>
</feature>
<feature type="modified residue" description="4-carboxyglutamate" evidence="2 3">
    <location>
        <position position="71"/>
    </location>
</feature>
<feature type="disulfide bond" evidence="3">
    <location>
        <begin position="73"/>
        <end position="79"/>
    </location>
</feature>
<organism>
    <name type="scientific">Oryctolagus cuniculus</name>
    <name type="common">Rabbit</name>
    <dbReference type="NCBI Taxonomy" id="9986"/>
    <lineage>
        <taxon>Eukaryota</taxon>
        <taxon>Metazoa</taxon>
        <taxon>Chordata</taxon>
        <taxon>Craniata</taxon>
        <taxon>Vertebrata</taxon>
        <taxon>Euteleostomi</taxon>
        <taxon>Mammalia</taxon>
        <taxon>Eutheria</taxon>
        <taxon>Euarchontoglires</taxon>
        <taxon>Glires</taxon>
        <taxon>Lagomorpha</taxon>
        <taxon>Leporidae</taxon>
        <taxon>Oryctolagus</taxon>
    </lineage>
</organism>
<keyword id="KW-0891">Chondrogenesis</keyword>
<keyword id="KW-0217">Developmental protein</keyword>
<keyword id="KW-0221">Differentiation</keyword>
<keyword id="KW-1015">Disulfide bond</keyword>
<keyword id="KW-0301">Gamma-carboxyglutamic acid</keyword>
<keyword id="KW-0892">Osteogenesis</keyword>
<keyword id="KW-0597">Phosphoprotein</keyword>
<keyword id="KW-1185">Reference proteome</keyword>
<keyword id="KW-0964">Secreted</keyword>
<keyword id="KW-0732">Signal</keyword>
<sequence length="103" mass="12441">MRSLLLLTVLAALVVAILCYESHESMESYEINPFINRRNANTFMSPQQRWMAKAQERVREQRKPAYELNREACDDYKLCERYAMVYGYNAAYNRYFRQRRRAE</sequence>
<name>MGP_RABIT</name>
<protein>
    <recommendedName>
        <fullName>Matrix Gla protein</fullName>
        <shortName>MGP</shortName>
    </recommendedName>
</protein>
<gene>
    <name type="primary">MGP</name>
</gene>
<evidence type="ECO:0000250" key="1"/>
<evidence type="ECO:0000250" key="2">
    <source>
        <dbReference type="UniProtKB" id="P07507"/>
    </source>
</evidence>
<evidence type="ECO:0000255" key="3">
    <source>
        <dbReference type="PROSITE-ProRule" id="PRU00463"/>
    </source>
</evidence>
<evidence type="ECO:0000305" key="4"/>